<sequence>MATALPRTLGELQLYRILQKANLLSYFDAFIQQGGDDVQQLCEAGEEEFLEIMALVGMASKPLHVRRLQKALRDWVTNPGLFNQPLTSLPVSSIPIYKLPEGSPTWLGISCNSYERSSSSREPHLKIPKCAATTCVQSLGQGKSEVGSLALQSVSDSRLWQGHHATESEHSLSPADLGSPASPKESSEALDAAAALSVAECVERMAPTLPKSDLSEVKELLKNNKKLAKMIGHIFEMSDEDPHKEEEIRKYSAIYGRFDSKRKDGKHLTLHELTVNEAAAQLCVKDNALLTRRDELFALARQVSREVTYKYTYRTTRLKCGERDELSPKRIKIEDGFPDFQESVPTLFQQARAKSEELAGLGSQQAEKGMAKQMELLCAQAGYERLQQERRLTAGLYRQSSGEQSPDGGLPSDSSDGQGERPLNLRIPSVQNRQPHHFVVDGELSRLYSSEAKSHSSESLGILKDYPHSAFTLEKKVIKTEPEDSR</sequence>
<evidence type="ECO:0000250" key="1"/>
<evidence type="ECO:0000250" key="2">
    <source>
        <dbReference type="UniProtKB" id="Q13506"/>
    </source>
</evidence>
<evidence type="ECO:0000256" key="3">
    <source>
        <dbReference type="SAM" id="MobiDB-lite"/>
    </source>
</evidence>
<evidence type="ECO:0000269" key="4">
    <source>
    </source>
</evidence>
<evidence type="ECO:0000305" key="5"/>
<evidence type="ECO:0007744" key="6">
    <source>
    </source>
</evidence>
<gene>
    <name type="primary">Nab1</name>
</gene>
<feature type="chain" id="PRO_0000077040" description="NGFI-A-binding protein 1">
    <location>
        <begin position="1"/>
        <end position="486"/>
    </location>
</feature>
<feature type="region of interest" description="NCD1">
    <location>
        <begin position="4"/>
        <end position="82"/>
    </location>
</feature>
<feature type="region of interest" description="Disordered" evidence="3">
    <location>
        <begin position="160"/>
        <end position="187"/>
    </location>
</feature>
<feature type="region of interest" description="NCD2">
    <location>
        <begin position="220"/>
        <end position="309"/>
    </location>
</feature>
<feature type="region of interest" description="Necessary for nuclear localization" evidence="1">
    <location>
        <begin position="306"/>
        <end position="337"/>
    </location>
</feature>
<feature type="region of interest" description="Disordered" evidence="3">
    <location>
        <begin position="398"/>
        <end position="438"/>
    </location>
</feature>
<feature type="compositionally biased region" description="Low complexity" evidence="3">
    <location>
        <begin position="404"/>
        <end position="417"/>
    </location>
</feature>
<feature type="modified residue" description="Phosphoserine" evidence="6">
    <location>
        <position position="171"/>
    </location>
</feature>
<feature type="modified residue" description="Phosphoserine" evidence="6">
    <location>
        <position position="182"/>
    </location>
</feature>
<feature type="modified residue" description="Phosphoserine" evidence="2">
    <location>
        <position position="327"/>
    </location>
</feature>
<feature type="modified residue" description="Phosphoserine" evidence="6">
    <location>
        <position position="405"/>
    </location>
</feature>
<feature type="cross-link" description="Glycyl lysine isopeptide (Lys-Gly) (interchain with G-Cter in SUMO2)" evidence="2">
    <location>
        <position position="126"/>
    </location>
</feature>
<feature type="cross-link" description="Glycyl lysine isopeptide (Lys-Gly) (interchain with G-Cter in SUMO2)" evidence="2">
    <location>
        <position position="129"/>
    </location>
</feature>
<feature type="cross-link" description="Glycyl lysine isopeptide (Lys-Gly) (interchain with G-Cter in SUMO2)" evidence="2">
    <location>
        <position position="143"/>
    </location>
</feature>
<feature type="cross-link" description="Glycyl lysine isopeptide (Lys-Gly) (interchain with G-Cter in SUMO2)" evidence="2">
    <location>
        <position position="211"/>
    </location>
</feature>
<feature type="cross-link" description="Glycyl lysine isopeptide (Lys-Gly) (interchain with G-Cter in SUMO1); alternate" evidence="2">
    <location>
        <position position="332"/>
    </location>
</feature>
<feature type="cross-link" description="Glycyl lysine isopeptide (Lys-Gly) (interchain with G-Cter in SUMO2); alternate" evidence="2">
    <location>
        <position position="332"/>
    </location>
</feature>
<feature type="cross-link" description="Glycyl lysine isopeptide (Lys-Gly) (interchain with G-Cter in SUMO2)" evidence="2">
    <location>
        <position position="354"/>
    </location>
</feature>
<feature type="cross-link" description="Glycyl lysine isopeptide (Lys-Gly) (interchain with G-Cter in SUMO2)" evidence="2">
    <location>
        <position position="368"/>
    </location>
</feature>
<feature type="cross-link" description="Glycyl lysine isopeptide (Lys-Gly) (interchain with G-Cter in SUMO2)" evidence="2">
    <location>
        <position position="372"/>
    </location>
</feature>
<feature type="cross-link" description="Glycyl lysine isopeptide (Lys-Gly) (interchain with G-Cter in SUMO2)" evidence="2">
    <location>
        <position position="453"/>
    </location>
</feature>
<feature type="cross-link" description="Glycyl lysine isopeptide (Lys-Gly) (interchain with G-Cter in SUMO2)" evidence="2">
    <location>
        <position position="464"/>
    </location>
</feature>
<feature type="cross-link" description="Glycyl lysine isopeptide (Lys-Gly) (interchain with G-Cter in SUMO2)" evidence="2">
    <location>
        <position position="476"/>
    </location>
</feature>
<feature type="cross-link" description="Glycyl lysine isopeptide (Lys-Gly) (interchain with G-Cter in SUMO1); alternate" evidence="2">
    <location>
        <position position="479"/>
    </location>
</feature>
<feature type="cross-link" description="Glycyl lysine isopeptide (Lys-Gly) (interchain with G-Cter in SUMO2); alternate" evidence="2">
    <location>
        <position position="479"/>
    </location>
</feature>
<feature type="mutagenesis site" description="Loss of transcriptional repression; when associated with Q-64." evidence="4">
    <original>Q</original>
    <variation>R</variation>
    <location>
        <position position="33"/>
    </location>
</feature>
<feature type="mutagenesis site" description="Loss of transcriptional repression." evidence="4">
    <original>E</original>
    <variation>K</variation>
    <location>
        <position position="51"/>
    </location>
</feature>
<feature type="mutagenesis site" description="Loss of transcriptional repression; when associated with R-33." evidence="4">
    <original>H</original>
    <variation>Q</variation>
    <location>
        <position position="64"/>
    </location>
</feature>
<feature type="sequence conflict" description="In Ref. 2; AAC52649." evidence="5" ref="2">
    <original>A</original>
    <variation>V</variation>
    <location>
        <position position="181"/>
    </location>
</feature>
<organism>
    <name type="scientific">Mus musculus</name>
    <name type="common">Mouse</name>
    <dbReference type="NCBI Taxonomy" id="10090"/>
    <lineage>
        <taxon>Eukaryota</taxon>
        <taxon>Metazoa</taxon>
        <taxon>Chordata</taxon>
        <taxon>Craniata</taxon>
        <taxon>Vertebrata</taxon>
        <taxon>Euteleostomi</taxon>
        <taxon>Mammalia</taxon>
        <taxon>Eutheria</taxon>
        <taxon>Euarchontoglires</taxon>
        <taxon>Glires</taxon>
        <taxon>Rodentia</taxon>
        <taxon>Myomorpha</taxon>
        <taxon>Muroidea</taxon>
        <taxon>Muridae</taxon>
        <taxon>Murinae</taxon>
        <taxon>Mus</taxon>
        <taxon>Mus</taxon>
    </lineage>
</organism>
<proteinExistence type="evidence at protein level"/>
<accession>Q61122</accession>
<accession>Q99J24</accession>
<reference key="1">
    <citation type="journal article" date="1995" name="Proc. Natl. Acad. Sci. U.S.A.">
        <title>Identification of NAB1, a repressor of NGFI-A- and Krox20-mediated transcription.</title>
        <authorList>
            <person name="Russo M.W."/>
            <person name="Sevetson B.R."/>
            <person name="Milbrandt J."/>
        </authorList>
    </citation>
    <scope>NUCLEOTIDE SEQUENCE [MRNA]</scope>
    <source>
        <tissue>Brain</tissue>
    </source>
</reference>
<reference key="2">
    <citation type="journal article" date="1996" name="Mol. Cell. Biol.">
        <title>NAB2, a corepressor of NGFI-A (Egr-1) and Krox20, is induced by proliferative and differentiative stimuli.</title>
        <authorList>
            <person name="Svaren J."/>
            <person name="Sevetson B.R."/>
            <person name="Apel E.D."/>
            <person name="Zimonjic D.B."/>
            <person name="Popescu N.C."/>
            <person name="Milbrandt J."/>
        </authorList>
    </citation>
    <scope>NUCLEOTIDE SEQUENCE [MRNA]</scope>
    <source>
        <tissue>Brain</tissue>
    </source>
</reference>
<reference key="3">
    <citation type="submission" date="2005-07" db="EMBL/GenBank/DDBJ databases">
        <authorList>
            <person name="Mural R.J."/>
            <person name="Adams M.D."/>
            <person name="Myers E.W."/>
            <person name="Smith H.O."/>
            <person name="Venter J.C."/>
        </authorList>
    </citation>
    <scope>NUCLEOTIDE SEQUENCE [LARGE SCALE GENOMIC DNA]</scope>
</reference>
<reference key="4">
    <citation type="journal article" date="2004" name="Genome Res.">
        <title>The status, quality, and expansion of the NIH full-length cDNA project: the Mammalian Gene Collection (MGC).</title>
        <authorList>
            <consortium name="The MGC Project Team"/>
        </authorList>
    </citation>
    <scope>NUCLEOTIDE SEQUENCE [LARGE SCALE MRNA]</scope>
    <source>
        <strain>129</strain>
        <strain>FVB/N</strain>
        <tissue>Kidney</tissue>
        <tissue>Mammary tumor</tissue>
    </source>
</reference>
<reference key="5">
    <citation type="journal article" date="1998" name="EMBO J.">
        <title>Novel mutants of NAB corepressors enhance activation by Egr transactivators.</title>
        <authorList>
            <person name="Svaren J."/>
            <person name="Sevetson B.R."/>
            <person name="Golda T."/>
            <person name="Stanton J.J."/>
            <person name="Swirnoff A.H."/>
            <person name="Milbrandt J."/>
        </authorList>
    </citation>
    <scope>FUNCTION</scope>
    <scope>MUTAGENESIS</scope>
</reference>
<reference key="6">
    <citation type="journal article" date="2007" name="Proc. Natl. Acad. Sci. U.S.A.">
        <title>Large-scale phosphorylation analysis of mouse liver.</title>
        <authorList>
            <person name="Villen J."/>
            <person name="Beausoleil S.A."/>
            <person name="Gerber S.A."/>
            <person name="Gygi S.P."/>
        </authorList>
    </citation>
    <scope>IDENTIFICATION BY MASS SPECTROMETRY [LARGE SCALE ANALYSIS]</scope>
    <source>
        <tissue>Liver</tissue>
    </source>
</reference>
<reference key="7">
    <citation type="journal article" date="2010" name="Cell">
        <title>A tissue-specific atlas of mouse protein phosphorylation and expression.</title>
        <authorList>
            <person name="Huttlin E.L."/>
            <person name="Jedrychowski M.P."/>
            <person name="Elias J.E."/>
            <person name="Goswami T."/>
            <person name="Rad R."/>
            <person name="Beausoleil S.A."/>
            <person name="Villen J."/>
            <person name="Haas W."/>
            <person name="Sowa M.E."/>
            <person name="Gygi S.P."/>
        </authorList>
    </citation>
    <scope>PHOSPHORYLATION [LARGE SCALE ANALYSIS] AT SER-171; SER-182 AND SER-405</scope>
    <scope>IDENTIFICATION BY MASS SPECTROMETRY [LARGE SCALE ANALYSIS]</scope>
    <source>
        <tissue>Kidney</tissue>
        <tissue>Testis</tissue>
    </source>
</reference>
<keyword id="KW-1017">Isopeptide bond</keyword>
<keyword id="KW-0539">Nucleus</keyword>
<keyword id="KW-0597">Phosphoprotein</keyword>
<keyword id="KW-1185">Reference proteome</keyword>
<keyword id="KW-0678">Repressor</keyword>
<keyword id="KW-0804">Transcription</keyword>
<keyword id="KW-0805">Transcription regulation</keyword>
<keyword id="KW-0832">Ubl conjugation</keyword>
<name>NAB1_MOUSE</name>
<protein>
    <recommendedName>
        <fullName>NGFI-A-binding protein 1</fullName>
    </recommendedName>
    <alternativeName>
        <fullName>EGR-1-binding protein 1</fullName>
    </alternativeName>
</protein>
<dbReference type="EMBL" id="U47008">
    <property type="protein sequence ID" value="AAC52649.1"/>
    <property type="molecule type" value="mRNA"/>
</dbReference>
<dbReference type="EMBL" id="CH466548">
    <property type="protein sequence ID" value="EDK99971.1"/>
    <property type="molecule type" value="Genomic_DNA"/>
</dbReference>
<dbReference type="EMBL" id="BC005627">
    <property type="protein sequence ID" value="AAH05627.1"/>
    <property type="molecule type" value="mRNA"/>
</dbReference>
<dbReference type="EMBL" id="BC016886">
    <property type="protein sequence ID" value="AAH16886.1"/>
    <property type="molecule type" value="mRNA"/>
</dbReference>
<dbReference type="CCDS" id="CCDS14944.1"/>
<dbReference type="RefSeq" id="NP_001407274.1">
    <property type="nucleotide sequence ID" value="NM_001420345.1"/>
</dbReference>
<dbReference type="RefSeq" id="NP_032693.2">
    <property type="nucleotide sequence ID" value="NM_008667.3"/>
</dbReference>
<dbReference type="RefSeq" id="XP_006495833.1">
    <property type="nucleotide sequence ID" value="XM_006495770.2"/>
</dbReference>
<dbReference type="SMR" id="Q61122"/>
<dbReference type="FunCoup" id="Q61122">
    <property type="interactions" value="2173"/>
</dbReference>
<dbReference type="IntAct" id="Q61122">
    <property type="interactions" value="1"/>
</dbReference>
<dbReference type="MINT" id="Q61122"/>
<dbReference type="STRING" id="10090.ENSMUSP00000066696"/>
<dbReference type="iPTMnet" id="Q61122"/>
<dbReference type="PhosphoSitePlus" id="Q61122"/>
<dbReference type="PaxDb" id="10090-ENSMUSP00000066696"/>
<dbReference type="ProteomicsDB" id="252643"/>
<dbReference type="Pumba" id="Q61122"/>
<dbReference type="Antibodypedia" id="1209">
    <property type="antibodies" value="336 antibodies from 28 providers"/>
</dbReference>
<dbReference type="DNASU" id="17936"/>
<dbReference type="Ensembl" id="ENSMUST00000069792.14">
    <property type="protein sequence ID" value="ENSMUSP00000066696.8"/>
    <property type="gene ID" value="ENSMUSG00000002881.15"/>
</dbReference>
<dbReference type="GeneID" id="17936"/>
<dbReference type="KEGG" id="mmu:17936"/>
<dbReference type="UCSC" id="uc007ayh.2">
    <property type="organism name" value="mouse"/>
</dbReference>
<dbReference type="AGR" id="MGI:107564"/>
<dbReference type="CTD" id="4664"/>
<dbReference type="MGI" id="MGI:107564">
    <property type="gene designation" value="Nab1"/>
</dbReference>
<dbReference type="VEuPathDB" id="HostDB:ENSMUSG00000002881"/>
<dbReference type="eggNOG" id="KOG3835">
    <property type="taxonomic scope" value="Eukaryota"/>
</dbReference>
<dbReference type="GeneTree" id="ENSGT00390000006330"/>
<dbReference type="InParanoid" id="Q61122"/>
<dbReference type="OMA" id="LCMRDTA"/>
<dbReference type="OrthoDB" id="10028556at2759"/>
<dbReference type="PhylomeDB" id="Q61122"/>
<dbReference type="TreeFam" id="TF315501"/>
<dbReference type="BioGRID-ORCS" id="17936">
    <property type="hits" value="0 hits in 78 CRISPR screens"/>
</dbReference>
<dbReference type="ChiTaRS" id="Nab1">
    <property type="organism name" value="mouse"/>
</dbReference>
<dbReference type="PRO" id="PR:Q61122"/>
<dbReference type="Proteomes" id="UP000000589">
    <property type="component" value="Chromosome 1"/>
</dbReference>
<dbReference type="RNAct" id="Q61122">
    <property type="molecule type" value="protein"/>
</dbReference>
<dbReference type="Bgee" id="ENSMUSG00000002881">
    <property type="expression patterns" value="Expressed in carotid body and 266 other cell types or tissues"/>
</dbReference>
<dbReference type="ExpressionAtlas" id="Q61122">
    <property type="expression patterns" value="baseline and differential"/>
</dbReference>
<dbReference type="GO" id="GO:0005634">
    <property type="term" value="C:nucleus"/>
    <property type="evidence" value="ECO:0007669"/>
    <property type="project" value="UniProtKB-SubCell"/>
</dbReference>
<dbReference type="GO" id="GO:0003712">
    <property type="term" value="F:transcription coregulator activity"/>
    <property type="evidence" value="ECO:0007669"/>
    <property type="project" value="InterPro"/>
</dbReference>
<dbReference type="GO" id="GO:0001958">
    <property type="term" value="P:endochondral ossification"/>
    <property type="evidence" value="ECO:0000316"/>
    <property type="project" value="MGI"/>
</dbReference>
<dbReference type="GO" id="GO:0042552">
    <property type="term" value="P:myelination"/>
    <property type="evidence" value="ECO:0000316"/>
    <property type="project" value="MGI"/>
</dbReference>
<dbReference type="GO" id="GO:0045892">
    <property type="term" value="P:negative regulation of DNA-templated transcription"/>
    <property type="evidence" value="ECO:0007669"/>
    <property type="project" value="InterPro"/>
</dbReference>
<dbReference type="GO" id="GO:0006355">
    <property type="term" value="P:regulation of DNA-templated transcription"/>
    <property type="evidence" value="ECO:0000316"/>
    <property type="project" value="MGI"/>
</dbReference>
<dbReference type="GO" id="GO:0045682">
    <property type="term" value="P:regulation of epidermis development"/>
    <property type="evidence" value="ECO:0000316"/>
    <property type="project" value="MGI"/>
</dbReference>
<dbReference type="GO" id="GO:0014037">
    <property type="term" value="P:Schwann cell differentiation"/>
    <property type="evidence" value="ECO:0000316"/>
    <property type="project" value="MGI"/>
</dbReference>
<dbReference type="FunFam" id="1.20.120.2010:FF:000001">
    <property type="entry name" value="NGFI-A-binding protein 1 isoform X1"/>
    <property type="match status" value="1"/>
</dbReference>
<dbReference type="Gene3D" id="1.20.120.2010">
    <property type="entry name" value="NAB conserved domain 2"/>
    <property type="match status" value="1"/>
</dbReference>
<dbReference type="InterPro" id="IPR006986">
    <property type="entry name" value="Nab1_C"/>
</dbReference>
<dbReference type="InterPro" id="IPR006989">
    <property type="entry name" value="NAB_co-repressor_dom"/>
</dbReference>
<dbReference type="InterPro" id="IPR039040">
    <property type="entry name" value="NAB_fam"/>
</dbReference>
<dbReference type="InterPro" id="IPR006988">
    <property type="entry name" value="Nab_N"/>
</dbReference>
<dbReference type="InterPro" id="IPR038398">
    <property type="entry name" value="NCD2_sf"/>
</dbReference>
<dbReference type="PANTHER" id="PTHR12623">
    <property type="entry name" value="NGFI-A BINDING PROTEIN"/>
    <property type="match status" value="1"/>
</dbReference>
<dbReference type="PANTHER" id="PTHR12623:SF9">
    <property type="entry name" value="NGFI-A-BINDING PROTEIN 1"/>
    <property type="match status" value="1"/>
</dbReference>
<dbReference type="Pfam" id="PF04902">
    <property type="entry name" value="Nab1"/>
    <property type="match status" value="1"/>
</dbReference>
<dbReference type="Pfam" id="PF04905">
    <property type="entry name" value="NCD2"/>
    <property type="match status" value="1"/>
</dbReference>
<dbReference type="Pfam" id="PF04904">
    <property type="entry name" value="SAM_NCD1"/>
    <property type="match status" value="1"/>
</dbReference>
<comment type="function">
    <text evidence="1 4">Acts as a transcriptional repressor for zinc finger transcription factors EGR1 and EGR2.</text>
</comment>
<comment type="subunit">
    <text>Homomultimers may associate with EGR1 bound to DNA.</text>
</comment>
<comment type="subcellular location">
    <subcellularLocation>
        <location evidence="1">Nucleus</location>
    </subcellularLocation>
</comment>
<comment type="tissue specificity">
    <text>Widely expressed in adult. In day 16 embryo highest levels in forebrain, thymus, salivary gland and cartilage.</text>
</comment>
<comment type="developmental stage">
    <text>In day 16 embryo highest levels in forebrain, thymus, salivary gland and cartilage.</text>
</comment>
<comment type="domain">
    <text>The NAB conserved domain 1 (NCD1) interacts with EGR1 inhibitory domain and mediates multimerization.</text>
</comment>
<comment type="domain">
    <text>The NAB conserved domain 2 (NCD2) is necessary for transcriptional repression.</text>
</comment>
<comment type="similarity">
    <text evidence="5">Belongs to the NAB family.</text>
</comment>